<keyword id="KW-0963">Cytoplasm</keyword>
<keyword id="KW-0489">Methyltransferase</keyword>
<keyword id="KW-0949">S-adenosyl-L-methionine</keyword>
<keyword id="KW-0808">Transferase</keyword>
<sequence>MPWIQLKLNTTGANAEDLSDALMEAGAVSITFQDTHDTPVFEPLPGETRLWGDTDVIGLFDAETDMNDVVAILENHPLLGAGFAHKIEQLEDKDWEREWMDNFHPMRFGERLWICPSWRDVPDENAVNVMLDPGLAFGTGTHPTTSLCLQWLDSLDLTGKTVIDFGCGSGILAIAALKLGAAKAIGIDIDPQAIQASRDNAERNGVSDRLELYLPKDQPEEMKADVVVANILAGPLRELAPLISVLPVSGGLLGLSGILASQAESVCEAYADSFALDPVVEKEEWCRITGRKN</sequence>
<organism>
    <name type="scientific">Escherichia coli (strain ATCC 8739 / DSM 1576 / NBRC 3972 / NCIMB 8545 / WDCM 00012 / Crooks)</name>
    <dbReference type="NCBI Taxonomy" id="481805"/>
    <lineage>
        <taxon>Bacteria</taxon>
        <taxon>Pseudomonadati</taxon>
        <taxon>Pseudomonadota</taxon>
        <taxon>Gammaproteobacteria</taxon>
        <taxon>Enterobacterales</taxon>
        <taxon>Enterobacteriaceae</taxon>
        <taxon>Escherichia</taxon>
    </lineage>
</organism>
<comment type="function">
    <text evidence="1">Methylates ribosomal protein L11.</text>
</comment>
<comment type="catalytic activity">
    <reaction evidence="1">
        <text>L-lysyl-[protein] + 3 S-adenosyl-L-methionine = N(6),N(6),N(6)-trimethyl-L-lysyl-[protein] + 3 S-adenosyl-L-homocysteine + 3 H(+)</text>
        <dbReference type="Rhea" id="RHEA:54192"/>
        <dbReference type="Rhea" id="RHEA-COMP:9752"/>
        <dbReference type="Rhea" id="RHEA-COMP:13826"/>
        <dbReference type="ChEBI" id="CHEBI:15378"/>
        <dbReference type="ChEBI" id="CHEBI:29969"/>
        <dbReference type="ChEBI" id="CHEBI:57856"/>
        <dbReference type="ChEBI" id="CHEBI:59789"/>
        <dbReference type="ChEBI" id="CHEBI:61961"/>
    </reaction>
</comment>
<comment type="subcellular location">
    <subcellularLocation>
        <location evidence="1">Cytoplasm</location>
    </subcellularLocation>
</comment>
<comment type="similarity">
    <text evidence="1">Belongs to the methyltransferase superfamily. PrmA family.</text>
</comment>
<dbReference type="EC" id="2.1.1.-" evidence="1"/>
<dbReference type="EMBL" id="CP000946">
    <property type="protein sequence ID" value="ACA76125.1"/>
    <property type="molecule type" value="Genomic_DNA"/>
</dbReference>
<dbReference type="RefSeq" id="WP_001145827.1">
    <property type="nucleotide sequence ID" value="NZ_MTFT01000027.1"/>
</dbReference>
<dbReference type="SMR" id="B1IQ33"/>
<dbReference type="GeneID" id="75206107"/>
<dbReference type="KEGG" id="ecl:EcolC_0447"/>
<dbReference type="HOGENOM" id="CLU_049382_4_1_6"/>
<dbReference type="GO" id="GO:0005829">
    <property type="term" value="C:cytosol"/>
    <property type="evidence" value="ECO:0007669"/>
    <property type="project" value="TreeGrafter"/>
</dbReference>
<dbReference type="GO" id="GO:0016279">
    <property type="term" value="F:protein-lysine N-methyltransferase activity"/>
    <property type="evidence" value="ECO:0007669"/>
    <property type="project" value="TreeGrafter"/>
</dbReference>
<dbReference type="GO" id="GO:0032259">
    <property type="term" value="P:methylation"/>
    <property type="evidence" value="ECO:0007669"/>
    <property type="project" value="UniProtKB-KW"/>
</dbReference>
<dbReference type="CDD" id="cd02440">
    <property type="entry name" value="AdoMet_MTases"/>
    <property type="match status" value="1"/>
</dbReference>
<dbReference type="FunFam" id="3.40.50.150:FF:000021">
    <property type="entry name" value="Ribosomal protein L11 methyltransferase"/>
    <property type="match status" value="1"/>
</dbReference>
<dbReference type="Gene3D" id="3.40.50.150">
    <property type="entry name" value="Vaccinia Virus protein VP39"/>
    <property type="match status" value="1"/>
</dbReference>
<dbReference type="HAMAP" id="MF_00735">
    <property type="entry name" value="Methyltr_PrmA"/>
    <property type="match status" value="1"/>
</dbReference>
<dbReference type="InterPro" id="IPR050078">
    <property type="entry name" value="Ribosomal_L11_MeTrfase_PrmA"/>
</dbReference>
<dbReference type="InterPro" id="IPR004498">
    <property type="entry name" value="Ribosomal_PrmA_MeTrfase"/>
</dbReference>
<dbReference type="InterPro" id="IPR029063">
    <property type="entry name" value="SAM-dependent_MTases_sf"/>
</dbReference>
<dbReference type="NCBIfam" id="TIGR00406">
    <property type="entry name" value="prmA"/>
    <property type="match status" value="1"/>
</dbReference>
<dbReference type="PANTHER" id="PTHR43648">
    <property type="entry name" value="ELECTRON TRANSFER FLAVOPROTEIN BETA SUBUNIT LYSINE METHYLTRANSFERASE"/>
    <property type="match status" value="1"/>
</dbReference>
<dbReference type="PANTHER" id="PTHR43648:SF1">
    <property type="entry name" value="ELECTRON TRANSFER FLAVOPROTEIN BETA SUBUNIT LYSINE METHYLTRANSFERASE"/>
    <property type="match status" value="1"/>
</dbReference>
<dbReference type="Pfam" id="PF06325">
    <property type="entry name" value="PrmA"/>
    <property type="match status" value="1"/>
</dbReference>
<dbReference type="PIRSF" id="PIRSF000401">
    <property type="entry name" value="RPL11_MTase"/>
    <property type="match status" value="1"/>
</dbReference>
<dbReference type="SUPFAM" id="SSF53335">
    <property type="entry name" value="S-adenosyl-L-methionine-dependent methyltransferases"/>
    <property type="match status" value="1"/>
</dbReference>
<proteinExistence type="inferred from homology"/>
<protein>
    <recommendedName>
        <fullName evidence="1">Ribosomal protein L11 methyltransferase</fullName>
        <shortName evidence="1">L11 Mtase</shortName>
        <ecNumber evidence="1">2.1.1.-</ecNumber>
    </recommendedName>
</protein>
<reference key="1">
    <citation type="submission" date="2008-02" db="EMBL/GenBank/DDBJ databases">
        <title>Complete sequence of Escherichia coli C str. ATCC 8739.</title>
        <authorList>
            <person name="Copeland A."/>
            <person name="Lucas S."/>
            <person name="Lapidus A."/>
            <person name="Glavina del Rio T."/>
            <person name="Dalin E."/>
            <person name="Tice H."/>
            <person name="Bruce D."/>
            <person name="Goodwin L."/>
            <person name="Pitluck S."/>
            <person name="Kiss H."/>
            <person name="Brettin T."/>
            <person name="Detter J.C."/>
            <person name="Han C."/>
            <person name="Kuske C.R."/>
            <person name="Schmutz J."/>
            <person name="Larimer F."/>
            <person name="Land M."/>
            <person name="Hauser L."/>
            <person name="Kyrpides N."/>
            <person name="Mikhailova N."/>
            <person name="Ingram L."/>
            <person name="Richardson P."/>
        </authorList>
    </citation>
    <scope>NUCLEOTIDE SEQUENCE [LARGE SCALE GENOMIC DNA]</scope>
    <source>
        <strain>ATCC 8739 / DSM 1576 / NBRC 3972 / NCIMB 8545 / WDCM 00012 / Crooks</strain>
    </source>
</reference>
<gene>
    <name evidence="1" type="primary">prmA</name>
    <name type="ordered locus">EcolC_0447</name>
</gene>
<feature type="chain" id="PRO_1000083351" description="Ribosomal protein L11 methyltransferase">
    <location>
        <begin position="1"/>
        <end position="293"/>
    </location>
</feature>
<feature type="binding site" evidence="1">
    <location>
        <position position="145"/>
    </location>
    <ligand>
        <name>S-adenosyl-L-methionine</name>
        <dbReference type="ChEBI" id="CHEBI:59789"/>
    </ligand>
</feature>
<feature type="binding site" evidence="1">
    <location>
        <position position="166"/>
    </location>
    <ligand>
        <name>S-adenosyl-L-methionine</name>
        <dbReference type="ChEBI" id="CHEBI:59789"/>
    </ligand>
</feature>
<feature type="binding site" evidence="1">
    <location>
        <position position="188"/>
    </location>
    <ligand>
        <name>S-adenosyl-L-methionine</name>
        <dbReference type="ChEBI" id="CHEBI:59789"/>
    </ligand>
</feature>
<feature type="binding site" evidence="1">
    <location>
        <position position="230"/>
    </location>
    <ligand>
        <name>S-adenosyl-L-methionine</name>
        <dbReference type="ChEBI" id="CHEBI:59789"/>
    </ligand>
</feature>
<evidence type="ECO:0000255" key="1">
    <source>
        <dbReference type="HAMAP-Rule" id="MF_00735"/>
    </source>
</evidence>
<name>PRMA_ECOLC</name>
<accession>B1IQ33</accession>